<comment type="function">
    <text>Inhibitor of cathepsin D (aspartic protease). May also inhibit trypsin and chymotrypsin (serine proteases). Protects the plant by inhibiting proteases of invading organisms.</text>
</comment>
<comment type="subcellular location">
    <subcellularLocation>
        <location evidence="1">Vacuole</location>
    </subcellularLocation>
</comment>
<comment type="induction">
    <text>By jasmonate.</text>
</comment>
<comment type="similarity">
    <text evidence="3">Belongs to the protease inhibitor I3 (leguminous Kunitz-type inhibitor) family.</text>
</comment>
<evidence type="ECO:0000250" key="1"/>
<evidence type="ECO:0000255" key="2"/>
<evidence type="ECO:0000305" key="3"/>
<sequence length="169" mass="18477">NSSYRIISIGRGALGGDVYLGKSPNSDAPCPDGVFRYNSDVGPSGTPVRFIPLSGGIFEDQLLNIQFNIPTVKLCVSYTIWKVGNLNAYFRTMLLETGGTIGQADNSYFKIVKSSKIGYNLLSCPFTSIICLRCPEDQFCAKVGVVIQNGKRRLALVNENPLDVLFQEV</sequence>
<accession>P58520</accession>
<protein>
    <recommendedName>
        <fullName>Aspartic protease inhibitor 6</fullName>
        <shortName>API-6</shortName>
    </recommendedName>
</protein>
<keyword id="KW-0062">Aspartic protease inhibitor</keyword>
<keyword id="KW-1015">Disulfide bond</keyword>
<keyword id="KW-0325">Glycoprotein</keyword>
<keyword id="KW-0646">Protease inhibitor</keyword>
<keyword id="KW-1185">Reference proteome</keyword>
<keyword id="KW-0722">Serine protease inhibitor</keyword>
<keyword id="KW-0926">Vacuole</keyword>
<reference key="1">
    <citation type="journal article" date="1997" name="Phytochemistry">
        <title>Jasmonic acid inducible aspartic proteinase inhibitors from potato.</title>
        <authorList>
            <person name="Kreft S."/>
            <person name="Ravnikar M."/>
            <person name="Mesko P."/>
            <person name="Pungercar J."/>
            <person name="Umek A."/>
            <person name="Kregar I."/>
            <person name="Strukelj B."/>
        </authorList>
    </citation>
    <scope>NUCLEOTIDE SEQUENCE</scope>
    <source>
        <strain>cv. Desiree</strain>
    </source>
</reference>
<dbReference type="SMR" id="P58520"/>
<dbReference type="MEROPS" id="I03.002"/>
<dbReference type="InParanoid" id="P58520"/>
<dbReference type="Proteomes" id="UP000011115">
    <property type="component" value="Unassembled WGS sequence"/>
</dbReference>
<dbReference type="ExpressionAtlas" id="P58520">
    <property type="expression patterns" value="baseline and differential"/>
</dbReference>
<dbReference type="GO" id="GO:0005773">
    <property type="term" value="C:vacuole"/>
    <property type="evidence" value="ECO:0007669"/>
    <property type="project" value="UniProtKB-SubCell"/>
</dbReference>
<dbReference type="GO" id="GO:0019828">
    <property type="term" value="F:aspartic-type endopeptidase inhibitor activity"/>
    <property type="evidence" value="ECO:0007669"/>
    <property type="project" value="UniProtKB-KW"/>
</dbReference>
<dbReference type="GO" id="GO:0004867">
    <property type="term" value="F:serine-type endopeptidase inhibitor activity"/>
    <property type="evidence" value="ECO:0007669"/>
    <property type="project" value="UniProtKB-KW"/>
</dbReference>
<dbReference type="CDD" id="cd23372">
    <property type="entry name" value="beta-trefoil_STI_CPI-like"/>
    <property type="match status" value="1"/>
</dbReference>
<dbReference type="Gene3D" id="2.80.10.50">
    <property type="match status" value="1"/>
</dbReference>
<dbReference type="InterPro" id="IPR011065">
    <property type="entry name" value="Kunitz_inhibitor_STI-like_sf"/>
</dbReference>
<dbReference type="InterPro" id="IPR002160">
    <property type="entry name" value="Prot_inh_Kunz-lg"/>
</dbReference>
<dbReference type="PANTHER" id="PTHR33107">
    <property type="entry name" value="KUNITZ TRYPSIN INHIBITOR 2"/>
    <property type="match status" value="1"/>
</dbReference>
<dbReference type="PANTHER" id="PTHR33107:SF38">
    <property type="entry name" value="SERINE PROTEASE INHIBITOR 5"/>
    <property type="match status" value="1"/>
</dbReference>
<dbReference type="Pfam" id="PF00197">
    <property type="entry name" value="Kunitz_legume"/>
    <property type="match status" value="1"/>
</dbReference>
<dbReference type="PRINTS" id="PR00291">
    <property type="entry name" value="KUNITZINHBTR"/>
</dbReference>
<dbReference type="SMART" id="SM00452">
    <property type="entry name" value="STI"/>
    <property type="match status" value="1"/>
</dbReference>
<dbReference type="SUPFAM" id="SSF50386">
    <property type="entry name" value="STI-like"/>
    <property type="match status" value="1"/>
</dbReference>
<proteinExistence type="evidence at transcript level"/>
<organism>
    <name type="scientific">Solanum tuberosum</name>
    <name type="common">Potato</name>
    <dbReference type="NCBI Taxonomy" id="4113"/>
    <lineage>
        <taxon>Eukaryota</taxon>
        <taxon>Viridiplantae</taxon>
        <taxon>Streptophyta</taxon>
        <taxon>Embryophyta</taxon>
        <taxon>Tracheophyta</taxon>
        <taxon>Spermatophyta</taxon>
        <taxon>Magnoliopsida</taxon>
        <taxon>eudicotyledons</taxon>
        <taxon>Gunneridae</taxon>
        <taxon>Pentapetalae</taxon>
        <taxon>asterids</taxon>
        <taxon>lamiids</taxon>
        <taxon>Solanales</taxon>
        <taxon>Solanaceae</taxon>
        <taxon>Solanoideae</taxon>
        <taxon>Solaneae</taxon>
        <taxon>Solanum</taxon>
    </lineage>
</organism>
<feature type="chain" id="PRO_0000083311" description="Aspartic protease inhibitor 6">
    <location>
        <begin position="1" status="less than"/>
        <end position="169"/>
    </location>
</feature>
<feature type="site" description="Reactive bond for trypsin" evidence="1">
    <location>
        <begin position="49"/>
        <end position="50"/>
    </location>
</feature>
<feature type="site" description="Reactive bond for chymotrypsin" evidence="1">
    <location>
        <begin position="93"/>
        <end position="94"/>
    </location>
</feature>
<feature type="glycosylation site" description="N-linked (GlcNAc...) asparagine" evidence="2">
    <location>
        <position position="1"/>
    </location>
</feature>
<feature type="disulfide bond" evidence="1">
    <location>
        <begin position="30"/>
        <end position="75"/>
    </location>
</feature>
<feature type="disulfide bond" evidence="1">
    <location>
        <begin position="124"/>
        <end position="134"/>
    </location>
</feature>
<feature type="non-terminal residue">
    <location>
        <position position="1"/>
    </location>
</feature>
<name>API6_SOLTU</name>